<organism>
    <name type="scientific">Arabidopsis thaliana</name>
    <name type="common">Mouse-ear cress</name>
    <dbReference type="NCBI Taxonomy" id="3702"/>
    <lineage>
        <taxon>Eukaryota</taxon>
        <taxon>Viridiplantae</taxon>
        <taxon>Streptophyta</taxon>
        <taxon>Embryophyta</taxon>
        <taxon>Tracheophyta</taxon>
        <taxon>Spermatophyta</taxon>
        <taxon>Magnoliopsida</taxon>
        <taxon>eudicotyledons</taxon>
        <taxon>Gunneridae</taxon>
        <taxon>Pentapetalae</taxon>
        <taxon>rosids</taxon>
        <taxon>malvids</taxon>
        <taxon>Brassicales</taxon>
        <taxon>Brassicaceae</taxon>
        <taxon>Camelineae</taxon>
        <taxon>Arabidopsis</taxon>
    </lineage>
</organism>
<accession>O48782</accession>
<accession>B3H4A6</accession>
<accession>Q7E9A5</accession>
<accession>Q9FPE3</accession>
<sequence>MAYLAPISSSLSIFKNPQLSRFQFSSSSPNPLFLRPRIQILSMTMNKSPSLVVVAATTAAEKQKKRYPGESKGFVEEMRFVAMRLHTKDQAKEGEKETKSIEERPVAKWEPTVEGYLRFLVDSKLVYDTLELIIQDSNFPTYAEFKNTGLERAEKLSTDLEWFKEQGYEIPEPTAPGKTYSQYLKELAEKDPQAFICHFYNIYFAHSAGGRMIGRKVAERILDNKELEFYKWDGELSQLLQNVREKLNKVAEEWTREEKNHCLEETEKSFKYSGEILRLILS</sequence>
<gene>
    <name type="primary">HO1</name>
    <name type="synonym">GUN2</name>
    <name type="synonym">HY1</name>
    <name type="synonym">HY6</name>
    <name type="synonym">TED4</name>
    <name type="ordered locus">At2g26670</name>
    <name type="ORF">F18A8.4</name>
</gene>
<comment type="function">
    <text evidence="3 4 5 6 7 8 10 11 13 14 15 16">Key enzyme in the synthesis of the chromophore of the phytochrome family of plant photoreceptors. Catalyzes the opening of the heme ring to form the open-chain tetrapyrrole biliverdin IX with the release of iron and carbon monoxide (CO). Produces specifically the biliverdin IX-alpha isomer. Can form complex with heme, is ferredoxin-dependent and its activity is increased in the presence of ascorbate. Plays a role in salt acclimation signaling. May affect the plastid-to-nucleus signaling pathway by perturbing tetrapyrrole synthesis. The plastid-to-nucleus signal plays an important role in the coordinated expression of both nuclear- and chloroplast-localized genes that encode photosynthesis-related proteins.</text>
</comment>
<comment type="catalytic activity">
    <reaction evidence="3 10">
        <text>heme b + 3 reduced [NADPH--hemoprotein reductase] + 3 O2 = biliverdin IXalpha + CO + Fe(2+) + 3 oxidized [NADPH--hemoprotein reductase] + 3 H2O + H(+)</text>
        <dbReference type="Rhea" id="RHEA:21764"/>
        <dbReference type="Rhea" id="RHEA-COMP:11964"/>
        <dbReference type="Rhea" id="RHEA-COMP:11965"/>
        <dbReference type="ChEBI" id="CHEBI:15377"/>
        <dbReference type="ChEBI" id="CHEBI:15378"/>
        <dbReference type="ChEBI" id="CHEBI:15379"/>
        <dbReference type="ChEBI" id="CHEBI:17245"/>
        <dbReference type="ChEBI" id="CHEBI:29033"/>
        <dbReference type="ChEBI" id="CHEBI:57618"/>
        <dbReference type="ChEBI" id="CHEBI:57991"/>
        <dbReference type="ChEBI" id="CHEBI:58210"/>
        <dbReference type="ChEBI" id="CHEBI:60344"/>
        <dbReference type="EC" id="1.14.14.18"/>
    </reaction>
</comment>
<comment type="activity regulation">
    <text evidence="10">Activated by ascorbate.</text>
</comment>
<comment type="biophysicochemical properties">
    <kinetics>
        <KM evidence="10 13">1.3 uM for hemin</KM>
        <KM evidence="10 13">1.9 uM for ferredoxin</KM>
        <KM evidence="10 13">420 uM for ascorbate</KM>
    </kinetics>
    <phDependence>
        <text evidence="10 13">Optimum pH is 7.2.</text>
    </phDependence>
</comment>
<comment type="subcellular location">
    <subcellularLocation>
        <location evidence="3 13">Plastid</location>
        <location evidence="3 13">Chloroplast</location>
    </subcellularLocation>
</comment>
<comment type="alternative products">
    <event type="alternative splicing"/>
    <isoform>
        <id>O48782-1</id>
        <name>1</name>
        <sequence type="displayed"/>
    </isoform>
    <isoform>
        <id>O48782-2</id>
        <name>2</name>
        <sequence type="described" ref="VSP_041652"/>
    </isoform>
</comment>
<comment type="tissue specificity">
    <text evidence="4 11 14">Widely expressed.</text>
</comment>
<comment type="induction">
    <text evidence="12 14">By salt treatment. Down-regulated by jasmonate.</text>
</comment>
<comment type="disruption phenotype">
    <text evidence="3 4 5 7 8 9 11 12 14 15 16">Long hypocotyl, incomplete chloroplast and leaf development, lack of photoreversible phytochromes and lack of phytochromobilin, the phytochrome chromophore. No cotyledon expansion in response to bright-red light. Increased levels of jasmonate (JA) and constitutive expression of JA-inducible defense genes. Increased sensitivity to salt stress and no acclimation response to salinity.</text>
</comment>
<comment type="similarity">
    <text evidence="17">Belongs to the heme oxygenase family.</text>
</comment>
<comment type="sequence caution" evidence="17">
    <conflict type="erroneous initiation">
        <sequence resource="EMBL-CDS" id="AAK52998"/>
    </conflict>
    <text>Truncated N-terminus.</text>
</comment>
<protein>
    <recommendedName>
        <fullName>Heme oxygenase 1, chloroplastic</fullName>
        <shortName>AtHO1</shortName>
        <ecNumber evidence="3 10">1.14.14.18</ecNumber>
    </recommendedName>
    <alternativeName>
        <fullName>Protein GENOMES UNCOUPLED 2</fullName>
    </alternativeName>
    <alternativeName>
        <fullName>Protein REVERSAL OF THE DET PHENOTYPE 4</fullName>
    </alternativeName>
</protein>
<proteinExistence type="evidence at protein level"/>
<feature type="transit peptide" description="Chloroplast" evidence="2">
    <location>
        <begin position="1"/>
        <end position="54"/>
    </location>
</feature>
<feature type="chain" id="PRO_0000412185" description="Heme oxygenase 1, chloroplastic">
    <location>
        <begin position="55"/>
        <end position="282"/>
    </location>
</feature>
<feature type="binding site" description="axial binding residue" evidence="1">
    <location>
        <position position="86"/>
    </location>
    <ligand>
        <name>heme b</name>
        <dbReference type="ChEBI" id="CHEBI:60344"/>
    </ligand>
    <ligandPart>
        <name>Fe</name>
        <dbReference type="ChEBI" id="CHEBI:18248"/>
    </ligandPart>
</feature>
<feature type="splice variant" id="VSP_041652" description="In isoform 2." evidence="17">
    <original>GEKETKSIEERPVAKWEPTVEGYLRFLVDSKLVYDTLELIIQDSNFPTY</original>
    <variation>D</variation>
    <location>
        <begin position="94"/>
        <end position="142"/>
    </location>
</feature>
<feature type="helix" evidence="18">
    <location>
        <begin position="74"/>
        <end position="84"/>
    </location>
</feature>
<feature type="turn" evidence="18">
    <location>
        <begin position="88"/>
        <end position="90"/>
    </location>
</feature>
<feature type="helix" evidence="18">
    <location>
        <begin position="101"/>
        <end position="103"/>
    </location>
</feature>
<feature type="helix" evidence="18">
    <location>
        <begin position="106"/>
        <end position="108"/>
    </location>
</feature>
<feature type="helix" evidence="18">
    <location>
        <begin position="113"/>
        <end position="135"/>
    </location>
</feature>
<feature type="helix" evidence="18">
    <location>
        <begin position="140"/>
        <end position="143"/>
    </location>
</feature>
<feature type="helix" evidence="18">
    <location>
        <begin position="153"/>
        <end position="165"/>
    </location>
</feature>
<feature type="helix" evidence="18">
    <location>
        <begin position="175"/>
        <end position="190"/>
    </location>
</feature>
<feature type="helix" evidence="18">
    <location>
        <begin position="192"/>
        <end position="206"/>
    </location>
</feature>
<feature type="helix" evidence="18">
    <location>
        <begin position="209"/>
        <end position="221"/>
    </location>
</feature>
<feature type="helix" evidence="18">
    <location>
        <begin position="228"/>
        <end position="230"/>
    </location>
</feature>
<feature type="helix" evidence="18">
    <location>
        <begin position="236"/>
        <end position="251"/>
    </location>
</feature>
<feature type="helix" evidence="18">
    <location>
        <begin position="256"/>
        <end position="264"/>
    </location>
</feature>
<feature type="helix" evidence="18">
    <location>
        <begin position="266"/>
        <end position="277"/>
    </location>
</feature>
<feature type="helix" evidence="18">
    <location>
        <begin position="278"/>
        <end position="281"/>
    </location>
</feature>
<reference key="1">
    <citation type="journal article" date="1999" name="Plant Cell">
        <title>The Arabidopsis photomorphogenic mutant hy1 is deficient in phytochrome chromophore biosynthesis as a result of a mutation in a plastid heme oxygenase.</title>
        <authorList>
            <person name="Muramoto T."/>
            <person name="Kohchi T."/>
            <person name="Yokota A."/>
            <person name="Hwang I."/>
            <person name="Goodman H.M."/>
        </authorList>
    </citation>
    <scope>NUCLEOTIDE SEQUENCE [GENOMIC DNA / MRNA] (ISOFORM 1)</scope>
    <scope>FUNCTION</scope>
    <scope>CATALYTIC ACTIVITY</scope>
    <scope>SUBCELLULAR LOCATION</scope>
    <scope>DISRUPTION PHENOTYPE</scope>
    <source>
        <strain>cv. Landsberg erecta</strain>
    </source>
</reference>
<reference key="2">
    <citation type="journal article" date="1999" name="Proc. Natl. Acad. Sci. U.S.A.">
        <title>The Arabidopsis thaliana HY1 locus, required for phytochrome-chromophore biosynthesis, encodes a protein related to heme oxygenases.</title>
        <authorList>
            <person name="Davis S.J."/>
            <person name="Kurepa J."/>
            <person name="Vierstra R.D."/>
        </authorList>
    </citation>
    <scope>NUCLEOTIDE SEQUENCE [GENOMIC DNA]</scope>
    <scope>FUNCTION</scope>
    <scope>TISSUE SPECIFICITY</scope>
    <scope>DISRUPTION PHENOTYPE</scope>
    <source>
        <strain>cv. Columbia</strain>
        <strain>cv. Landsberg erecta</strain>
    </source>
</reference>
<reference key="3">
    <citation type="journal article" date="1999" name="Nature">
        <title>Sequence and analysis of chromosome 2 of the plant Arabidopsis thaliana.</title>
        <authorList>
            <person name="Lin X."/>
            <person name="Kaul S."/>
            <person name="Rounsley S.D."/>
            <person name="Shea T.P."/>
            <person name="Benito M.-I."/>
            <person name="Town C.D."/>
            <person name="Fujii C.Y."/>
            <person name="Mason T.M."/>
            <person name="Bowman C.L."/>
            <person name="Barnstead M.E."/>
            <person name="Feldblyum T.V."/>
            <person name="Buell C.R."/>
            <person name="Ketchum K.A."/>
            <person name="Lee J.J."/>
            <person name="Ronning C.M."/>
            <person name="Koo H.L."/>
            <person name="Moffat K.S."/>
            <person name="Cronin L.A."/>
            <person name="Shen M."/>
            <person name="Pai G."/>
            <person name="Van Aken S."/>
            <person name="Umayam L."/>
            <person name="Tallon L.J."/>
            <person name="Gill J.E."/>
            <person name="Adams M.D."/>
            <person name="Carrera A.J."/>
            <person name="Creasy T.H."/>
            <person name="Goodman H.M."/>
            <person name="Somerville C.R."/>
            <person name="Copenhaver G.P."/>
            <person name="Preuss D."/>
            <person name="Nierman W.C."/>
            <person name="White O."/>
            <person name="Eisen J.A."/>
            <person name="Salzberg S.L."/>
            <person name="Fraser C.M."/>
            <person name="Venter J.C."/>
        </authorList>
    </citation>
    <scope>NUCLEOTIDE SEQUENCE [LARGE SCALE GENOMIC DNA]</scope>
    <source>
        <strain>cv. Columbia</strain>
    </source>
</reference>
<reference key="4">
    <citation type="journal article" date="2017" name="Plant J.">
        <title>Araport11: a complete reannotation of the Arabidopsis thaliana reference genome.</title>
        <authorList>
            <person name="Cheng C.Y."/>
            <person name="Krishnakumar V."/>
            <person name="Chan A.P."/>
            <person name="Thibaud-Nissen F."/>
            <person name="Schobel S."/>
            <person name="Town C.D."/>
        </authorList>
    </citation>
    <scope>GENOME REANNOTATION</scope>
    <source>
        <strain>cv. Columbia</strain>
    </source>
</reference>
<reference key="5">
    <citation type="journal article" date="2003" name="Science">
        <title>Empirical analysis of transcriptional activity in the Arabidopsis genome.</title>
        <authorList>
            <person name="Yamada K."/>
            <person name="Lim J."/>
            <person name="Dale J.M."/>
            <person name="Chen H."/>
            <person name="Shinn P."/>
            <person name="Palm C.J."/>
            <person name="Southwick A.M."/>
            <person name="Wu H.C."/>
            <person name="Kim C.J."/>
            <person name="Nguyen M."/>
            <person name="Pham P.K."/>
            <person name="Cheuk R.F."/>
            <person name="Karlin-Newmann G."/>
            <person name="Liu S.X."/>
            <person name="Lam B."/>
            <person name="Sakano H."/>
            <person name="Wu T."/>
            <person name="Yu G."/>
            <person name="Miranda M."/>
            <person name="Quach H.L."/>
            <person name="Tripp M."/>
            <person name="Chang C.H."/>
            <person name="Lee J.M."/>
            <person name="Toriumi M.J."/>
            <person name="Chan M.M."/>
            <person name="Tang C.C."/>
            <person name="Onodera C.S."/>
            <person name="Deng J.M."/>
            <person name="Akiyama K."/>
            <person name="Ansari Y."/>
            <person name="Arakawa T."/>
            <person name="Banh J."/>
            <person name="Banno F."/>
            <person name="Bowser L."/>
            <person name="Brooks S.Y."/>
            <person name="Carninci P."/>
            <person name="Chao Q."/>
            <person name="Choy N."/>
            <person name="Enju A."/>
            <person name="Goldsmith A.D."/>
            <person name="Gurjal M."/>
            <person name="Hansen N.F."/>
            <person name="Hayashizaki Y."/>
            <person name="Johnson-Hopson C."/>
            <person name="Hsuan V.W."/>
            <person name="Iida K."/>
            <person name="Karnes M."/>
            <person name="Khan S."/>
            <person name="Koesema E."/>
            <person name="Ishida J."/>
            <person name="Jiang P.X."/>
            <person name="Jones T."/>
            <person name="Kawai J."/>
            <person name="Kamiya A."/>
            <person name="Meyers C."/>
            <person name="Nakajima M."/>
            <person name="Narusaka M."/>
            <person name="Seki M."/>
            <person name="Sakurai T."/>
            <person name="Satou M."/>
            <person name="Tamse R."/>
            <person name="Vaysberg M."/>
            <person name="Wallender E.K."/>
            <person name="Wong C."/>
            <person name="Yamamura Y."/>
            <person name="Yuan S."/>
            <person name="Shinozaki K."/>
            <person name="Davis R.W."/>
            <person name="Theologis A."/>
            <person name="Ecker J.R."/>
        </authorList>
    </citation>
    <scope>NUCLEOTIDE SEQUENCE [LARGE SCALE MRNA] (ISOFORM 1)</scope>
    <source>
        <strain>cv. Columbia</strain>
    </source>
</reference>
<reference key="6">
    <citation type="submission" date="2002-03" db="EMBL/GenBank/DDBJ databases">
        <title>Full-length cDNA from Arabidopsis thaliana.</title>
        <authorList>
            <person name="Brover V.V."/>
            <person name="Troukhan M.E."/>
            <person name="Alexandrov N.A."/>
            <person name="Lu Y.-P."/>
            <person name="Flavell R.B."/>
            <person name="Feldmann K.A."/>
        </authorList>
    </citation>
    <scope>NUCLEOTIDE SEQUENCE [LARGE SCALE MRNA] (ISOFORM 1)</scope>
</reference>
<reference key="7">
    <citation type="journal article" date="1989" name="Plant Cell">
        <title>Different roles for phytochrome in etiolated and green plants deduced from characterization of Arabidopsis thaliana mutants.</title>
        <authorList>
            <person name="Chory J."/>
            <person name="Peto C.A."/>
            <person name="Ashbaugh M."/>
            <person name="Saganich R."/>
            <person name="Pratt L."/>
            <person name="Ausubel F."/>
        </authorList>
    </citation>
    <scope>DISRUPTION PHENOTYPE</scope>
</reference>
<reference key="8">
    <citation type="journal article" date="1991" name="Plant Cell">
        <title>Phytochrome-deficient hy1 and hy2 long hypocotyl mutants of Arabidopsis are defective in phytochrome chromophore biosynthesis.</title>
        <authorList>
            <person name="Parks B.M."/>
            <person name="Quail P.H."/>
        </authorList>
    </citation>
    <scope>FUNCTION</scope>
    <scope>DISRUPTION PHENOTYPE</scope>
</reference>
<reference key="9">
    <citation type="journal article" date="1993" name="Cell">
        <title>Signal transduction mutants of Arabidopsis uncouple nuclear CAB and RBCS gene expression from chloroplast development.</title>
        <authorList>
            <person name="Susek R.E."/>
            <person name="Ausubel F.M."/>
            <person name="Chory J."/>
        </authorList>
    </citation>
    <scope>FUNCTION</scope>
    <scope>DISRUPTION PHENOTYPE</scope>
</reference>
<reference key="10">
    <citation type="journal article" date="1994" name="Plant Physiol.">
        <title>Light-stimulated cotyledon expansion in Arabidopsis seedlings (the role of phytochrome b).</title>
        <authorList>
            <person name="Neff M.M."/>
            <person name="Van Volkenburgh E."/>
        </authorList>
    </citation>
    <scope>FUNCTION</scope>
    <scope>DISRUPTION PHENOTYPE</scope>
</reference>
<reference key="11">
    <citation type="journal article" date="2000" name="Plant J.">
        <title>Interactions between hy1 and gun mutants of Arabidopsis, and their implications for plastid/nuclear signalling.</title>
        <authorList>
            <person name="Vinti G."/>
            <person name="Hills A."/>
            <person name="Campbell S."/>
            <person name="Bowyer J.R."/>
            <person name="Mochizuki N."/>
            <person name="Chory J."/>
            <person name="Lopez-Juez E."/>
        </authorList>
    </citation>
    <scope>FUNCTION</scope>
    <scope>DISRUPTION PHENOTYPE</scope>
</reference>
<reference key="12">
    <citation type="journal article" date="2001" name="Proc. Natl. Acad. Sci. U.S.A.">
        <title>Arabidopsis genomes uncoupled 5 (GUN5) mutant reveals the involvement of Mg-chelatase H subunit in plastid-to-nucleus signal transduction.</title>
        <authorList>
            <person name="Mochizuki N."/>
            <person name="Brusslan J.A."/>
            <person name="Larkin R."/>
            <person name="Nagatani A."/>
            <person name="Chory J."/>
        </authorList>
    </citation>
    <scope>FUNCTION</scope>
</reference>
<reference key="13">
    <citation type="journal article" date="2002" name="Plant Physiol.">
        <title>Expression and biochemical properties of a ferredoxin-dependent heme oxygenase required for phytochrome chromophore synthesis.</title>
        <authorList>
            <person name="Muramoto T."/>
            <person name="Tsurui N."/>
            <person name="Terry M.J."/>
            <person name="Yokota A."/>
            <person name="Kohchi T."/>
        </authorList>
    </citation>
    <scope>FUNCTION</scope>
    <scope>CATALYTIC ACTIVITY</scope>
    <scope>ACTIVITY REGULATION</scope>
    <scope>BIOPHYSICOCHEMICAL PROPERTIES</scope>
</reference>
<reference key="14">
    <citation type="journal article" date="2006" name="Plant Physiol.">
        <title>Multiple heme oxygenase family members contribute to the biosynthesis of the phytochrome chromophore in Arabidopsis.</title>
        <authorList>
            <person name="Emborg T.J."/>
            <person name="Walker J.M."/>
            <person name="Noh B."/>
            <person name="Vierstra R.D."/>
        </authorList>
    </citation>
    <scope>FUNCTION</scope>
    <scope>TISSUE SPECIFICITY</scope>
    <scope>DISRUPTION PHENOTYPE</scope>
</reference>
<reference key="15">
    <citation type="journal article" date="2007" name="Plant Cell Physiol.">
        <title>Phytochrome chromophore deficiency leads to overproduction of jasmonic acid and elevated expression of jasmonate-responsive genes in Arabidopsis.</title>
        <authorList>
            <person name="Zhai Q."/>
            <person name="Li C.B."/>
            <person name="Zheng W."/>
            <person name="Wu X."/>
            <person name="Zhao J."/>
            <person name="Zhou G."/>
            <person name="Jiang H."/>
            <person name="Sun J."/>
            <person name="Lou Y."/>
            <person name="Li C."/>
        </authorList>
    </citation>
    <scope>INDUCTION</scope>
    <scope>DISRUPTION PHENOTYPE</scope>
</reference>
<reference key="16">
    <citation type="journal article" date="2010" name="Biochem. J.">
        <title>Characterization of the haem oxygenase protein family in Arabidopsis thaliana reveals a diversity of functions.</title>
        <authorList>
            <person name="Gisk B."/>
            <person name="Yasui Y."/>
            <person name="Kohchi T."/>
            <person name="Frankenberg-Dinkel N."/>
        </authorList>
    </citation>
    <scope>FUNCTION</scope>
    <scope>SUBCELLULAR LOCATION</scope>
    <scope>BIOPHYSICOCHEMICAL PROPERTIES</scope>
</reference>
<reference key="17">
    <citation type="journal article" date="2010" name="Biochemistry">
        <title>Enzymatic ring opening of an iron corrole by plant-type heme oxygenases: unexpected substrate and protein selectivities.</title>
        <authorList>
            <person name="Gisk B."/>
            <person name="Bregier F."/>
            <person name="Krueger R.A."/>
            <person name="Broering M."/>
            <person name="Frankenberg-Dinkel N."/>
        </authorList>
    </citation>
    <scope>FUNCTION</scope>
    <scope>TISSUE SPECIFICITY</scope>
    <scope>INDUCTION</scope>
    <scope>DISRUPTION PHENOTYPE</scope>
</reference>
<reference key="18">
    <citation type="journal article" date="2011" name="Plant J.">
        <title>Evidence of Arabidopsis salt acclimation induced by up-regulation of HY1 and the regulatory role of RbohD-derived reactive oxygen species synthesis.</title>
        <authorList>
            <person name="Xie Y.J."/>
            <person name="Xu S."/>
            <person name="Han B."/>
            <person name="Wu M.Z."/>
            <person name="Yuan X.X."/>
            <person name="Han Y."/>
            <person name="Gu Q."/>
            <person name="Xu D.K."/>
            <person name="Yang Q."/>
            <person name="Shen W.B."/>
        </authorList>
    </citation>
    <scope>FUNCTION</scope>
    <scope>DISRUPTION PHENOTYPE</scope>
</reference>
<keyword id="KW-0002">3D-structure</keyword>
<keyword id="KW-0025">Alternative splicing</keyword>
<keyword id="KW-0150">Chloroplast</keyword>
<keyword id="KW-0349">Heme</keyword>
<keyword id="KW-0408">Iron</keyword>
<keyword id="KW-0479">Metal-binding</keyword>
<keyword id="KW-0560">Oxidoreductase</keyword>
<keyword id="KW-0602">Photosynthesis</keyword>
<keyword id="KW-0934">Plastid</keyword>
<keyword id="KW-1185">Reference proteome</keyword>
<keyword id="KW-0809">Transit peptide</keyword>
<dbReference type="EC" id="1.14.14.18" evidence="3 10"/>
<dbReference type="EMBL" id="AB021857">
    <property type="protein sequence ID" value="BAA77758.1"/>
    <property type="molecule type" value="Genomic_DNA"/>
</dbReference>
<dbReference type="EMBL" id="AB021858">
    <property type="protein sequence ID" value="BAA77759.1"/>
    <property type="molecule type" value="mRNA"/>
</dbReference>
<dbReference type="EMBL" id="AF132475">
    <property type="protein sequence ID" value="AAD22107.1"/>
    <property type="molecule type" value="Genomic_DNA"/>
</dbReference>
<dbReference type="EMBL" id="AF132476">
    <property type="protein sequence ID" value="AAD22108.1"/>
    <property type="molecule type" value="Genomic_DNA"/>
</dbReference>
<dbReference type="EMBL" id="AC003105">
    <property type="protein sequence ID" value="AAB95301.2"/>
    <property type="molecule type" value="Genomic_DNA"/>
</dbReference>
<dbReference type="EMBL" id="CP002685">
    <property type="protein sequence ID" value="AEC07872.1"/>
    <property type="molecule type" value="Genomic_DNA"/>
</dbReference>
<dbReference type="EMBL" id="CP002685">
    <property type="protein sequence ID" value="AEC07873.1"/>
    <property type="molecule type" value="Genomic_DNA"/>
</dbReference>
<dbReference type="EMBL" id="AF327418">
    <property type="protein sequence ID" value="AAG42008.2"/>
    <property type="molecule type" value="mRNA"/>
</dbReference>
<dbReference type="EMBL" id="AF375414">
    <property type="protein sequence ID" value="AAK52998.1"/>
    <property type="status" value="ALT_INIT"/>
    <property type="molecule type" value="mRNA"/>
</dbReference>
<dbReference type="EMBL" id="AY129477">
    <property type="protein sequence ID" value="AAM91063.1"/>
    <property type="molecule type" value="mRNA"/>
</dbReference>
<dbReference type="EMBL" id="BT002327">
    <property type="protein sequence ID" value="AAN86160.1"/>
    <property type="molecule type" value="mRNA"/>
</dbReference>
<dbReference type="EMBL" id="AY087288">
    <property type="protein sequence ID" value="AAM64841.1"/>
    <property type="molecule type" value="mRNA"/>
</dbReference>
<dbReference type="PIR" id="T52457">
    <property type="entry name" value="T52457"/>
</dbReference>
<dbReference type="RefSeq" id="NP_001118392.1">
    <molecule id="O48782-2"/>
    <property type="nucleotide sequence ID" value="NM_001124920.1"/>
</dbReference>
<dbReference type="RefSeq" id="NP_180235.1">
    <molecule id="O48782-1"/>
    <property type="nucleotide sequence ID" value="NM_128224.3"/>
</dbReference>
<dbReference type="PDB" id="7EQH">
    <property type="method" value="X-ray"/>
    <property type="resolution" value="2.20 A"/>
    <property type="chains" value="A/B=55-282"/>
</dbReference>
<dbReference type="PDBsum" id="7EQH"/>
<dbReference type="SMR" id="O48782"/>
<dbReference type="BioGRID" id="2560">
    <property type="interactions" value="1"/>
</dbReference>
<dbReference type="FunCoup" id="O48782">
    <property type="interactions" value="539"/>
</dbReference>
<dbReference type="STRING" id="3702.O48782"/>
<dbReference type="iPTMnet" id="O48782"/>
<dbReference type="PaxDb" id="3702-AT2G26670.1"/>
<dbReference type="ProteomicsDB" id="232086">
    <molecule id="O48782-1"/>
</dbReference>
<dbReference type="EnsemblPlants" id="AT2G26670.1">
    <molecule id="O48782-1"/>
    <property type="protein sequence ID" value="AT2G26670.1"/>
    <property type="gene ID" value="AT2G26670"/>
</dbReference>
<dbReference type="EnsemblPlants" id="AT2G26670.2">
    <molecule id="O48782-2"/>
    <property type="protein sequence ID" value="AT2G26670.2"/>
    <property type="gene ID" value="AT2G26670"/>
</dbReference>
<dbReference type="GeneID" id="817208"/>
<dbReference type="Gramene" id="AT2G26670.1">
    <molecule id="O48782-1"/>
    <property type="protein sequence ID" value="AT2G26670.1"/>
    <property type="gene ID" value="AT2G26670"/>
</dbReference>
<dbReference type="Gramene" id="AT2G26670.2">
    <molecule id="O48782-2"/>
    <property type="protein sequence ID" value="AT2G26670.2"/>
    <property type="gene ID" value="AT2G26670"/>
</dbReference>
<dbReference type="KEGG" id="ath:AT2G26670"/>
<dbReference type="Araport" id="AT2G26670"/>
<dbReference type="TAIR" id="AT2G26670">
    <property type="gene designation" value="TED4"/>
</dbReference>
<dbReference type="eggNOG" id="KOG4480">
    <property type="taxonomic scope" value="Eukaryota"/>
</dbReference>
<dbReference type="HOGENOM" id="CLU_063325_1_1_1"/>
<dbReference type="InParanoid" id="O48782"/>
<dbReference type="OMA" id="PPEFICH"/>
<dbReference type="OrthoDB" id="652091at2759"/>
<dbReference type="PhylomeDB" id="O48782"/>
<dbReference type="BioCyc" id="ARA:AT2G26670-MONOMER"/>
<dbReference type="BioCyc" id="MetaCyc:AT2G26670-MONOMER"/>
<dbReference type="PRO" id="PR:O48782"/>
<dbReference type="Proteomes" id="UP000006548">
    <property type="component" value="Chromosome 2"/>
</dbReference>
<dbReference type="ExpressionAtlas" id="O48782">
    <property type="expression patterns" value="baseline and differential"/>
</dbReference>
<dbReference type="GO" id="GO:0009507">
    <property type="term" value="C:chloroplast"/>
    <property type="evidence" value="ECO:0000314"/>
    <property type="project" value="TAIR"/>
</dbReference>
<dbReference type="GO" id="GO:0020037">
    <property type="term" value="F:heme binding"/>
    <property type="evidence" value="ECO:0000314"/>
    <property type="project" value="TAIR"/>
</dbReference>
<dbReference type="GO" id="GO:0004392">
    <property type="term" value="F:heme oxygenase (decyclizing) activity"/>
    <property type="evidence" value="ECO:0000314"/>
    <property type="project" value="TAIR"/>
</dbReference>
<dbReference type="GO" id="GO:0046872">
    <property type="term" value="F:metal ion binding"/>
    <property type="evidence" value="ECO:0007669"/>
    <property type="project" value="UniProtKB-KW"/>
</dbReference>
<dbReference type="GO" id="GO:0016117">
    <property type="term" value="P:carotenoid biosynthetic process"/>
    <property type="evidence" value="ECO:0000315"/>
    <property type="project" value="TAIR"/>
</dbReference>
<dbReference type="GO" id="GO:0071494">
    <property type="term" value="P:cellular response to UV-C"/>
    <property type="evidence" value="ECO:0000315"/>
    <property type="project" value="TAIR"/>
</dbReference>
<dbReference type="GO" id="GO:0010019">
    <property type="term" value="P:chloroplast-nucleus signaling pathway"/>
    <property type="evidence" value="ECO:0000315"/>
    <property type="project" value="TAIR"/>
</dbReference>
<dbReference type="GO" id="GO:0009813">
    <property type="term" value="P:flavonoid biosynthetic process"/>
    <property type="evidence" value="ECO:0000315"/>
    <property type="project" value="TAIR"/>
</dbReference>
<dbReference type="GO" id="GO:0006788">
    <property type="term" value="P:heme oxidation"/>
    <property type="evidence" value="ECO:0007669"/>
    <property type="project" value="InterPro"/>
</dbReference>
<dbReference type="GO" id="GO:0015979">
    <property type="term" value="P:photosynthesis"/>
    <property type="evidence" value="ECO:0007669"/>
    <property type="project" value="UniProtKB-KW"/>
</dbReference>
<dbReference type="GO" id="GO:0010024">
    <property type="term" value="P:phytochromobilin biosynthetic process"/>
    <property type="evidence" value="ECO:0000314"/>
    <property type="project" value="TAIR"/>
</dbReference>
<dbReference type="GO" id="GO:0010075">
    <property type="term" value="P:regulation of meristem growth"/>
    <property type="evidence" value="ECO:0000316"/>
    <property type="project" value="TAIR"/>
</dbReference>
<dbReference type="GO" id="GO:0010119">
    <property type="term" value="P:regulation of stomatal movement"/>
    <property type="evidence" value="ECO:0000316"/>
    <property type="project" value="TAIR"/>
</dbReference>
<dbReference type="CDD" id="cd19165">
    <property type="entry name" value="HemeO"/>
    <property type="match status" value="1"/>
</dbReference>
<dbReference type="FunFam" id="1.20.910.10:FF:000005">
    <property type="entry name" value="Heme oxygenase 1"/>
    <property type="match status" value="1"/>
</dbReference>
<dbReference type="Gene3D" id="1.20.910.10">
    <property type="entry name" value="Heme oxygenase-like"/>
    <property type="match status" value="1"/>
</dbReference>
<dbReference type="InterPro" id="IPR002051">
    <property type="entry name" value="Haem_Oase"/>
</dbReference>
<dbReference type="InterPro" id="IPR016053">
    <property type="entry name" value="Haem_Oase-like"/>
</dbReference>
<dbReference type="InterPro" id="IPR016084">
    <property type="entry name" value="Haem_Oase-like_multi-hlx"/>
</dbReference>
<dbReference type="InterPro" id="IPR016951">
    <property type="entry name" value="Haem_Oase_decyc_pln"/>
</dbReference>
<dbReference type="PANTHER" id="PTHR35703">
    <property type="entry name" value="HEME OXYGENASE 1, CHLOROPLASTIC-RELATED"/>
    <property type="match status" value="1"/>
</dbReference>
<dbReference type="PANTHER" id="PTHR35703:SF2">
    <property type="entry name" value="HEME OXYGENASE 1, CHLOROPLASTIC-RELATED"/>
    <property type="match status" value="1"/>
</dbReference>
<dbReference type="Pfam" id="PF01126">
    <property type="entry name" value="Heme_oxygenase"/>
    <property type="match status" value="1"/>
</dbReference>
<dbReference type="PIRSF" id="PIRSF030219">
    <property type="entry name" value="Heme_Oase_decyc_pln"/>
    <property type="match status" value="1"/>
</dbReference>
<dbReference type="SUPFAM" id="SSF48613">
    <property type="entry name" value="Heme oxygenase-like"/>
    <property type="match status" value="1"/>
</dbReference>
<evidence type="ECO:0000250" key="1"/>
<evidence type="ECO:0000255" key="2"/>
<evidence type="ECO:0000269" key="3">
    <source>
    </source>
</evidence>
<evidence type="ECO:0000269" key="4">
    <source>
    </source>
</evidence>
<evidence type="ECO:0000269" key="5">
    <source>
    </source>
</evidence>
<evidence type="ECO:0000269" key="6">
    <source>
    </source>
</evidence>
<evidence type="ECO:0000269" key="7">
    <source>
    </source>
</evidence>
<evidence type="ECO:0000269" key="8">
    <source>
    </source>
</evidence>
<evidence type="ECO:0000269" key="9">
    <source>
    </source>
</evidence>
<evidence type="ECO:0000269" key="10">
    <source>
    </source>
</evidence>
<evidence type="ECO:0000269" key="11">
    <source>
    </source>
</evidence>
<evidence type="ECO:0000269" key="12">
    <source>
    </source>
</evidence>
<evidence type="ECO:0000269" key="13">
    <source>
    </source>
</evidence>
<evidence type="ECO:0000269" key="14">
    <source>
    </source>
</evidence>
<evidence type="ECO:0000269" key="15">
    <source>
    </source>
</evidence>
<evidence type="ECO:0000269" key="16">
    <source>
    </source>
</evidence>
<evidence type="ECO:0000305" key="17"/>
<evidence type="ECO:0007829" key="18">
    <source>
        <dbReference type="PDB" id="7EQH"/>
    </source>
</evidence>
<name>HMOX1_ARATH</name>